<proteinExistence type="inferred from homology"/>
<reference key="1">
    <citation type="submission" date="2005-08" db="EMBL/GenBank/DDBJ databases">
        <title>Complete sequence of Pelodictyon luteolum DSM 273.</title>
        <authorList>
            <consortium name="US DOE Joint Genome Institute"/>
            <person name="Copeland A."/>
            <person name="Lucas S."/>
            <person name="Lapidus A."/>
            <person name="Barry K."/>
            <person name="Detter J.C."/>
            <person name="Glavina T."/>
            <person name="Hammon N."/>
            <person name="Israni S."/>
            <person name="Pitluck S."/>
            <person name="Bryant D."/>
            <person name="Schmutz J."/>
            <person name="Larimer F."/>
            <person name="Land M."/>
            <person name="Kyrpides N."/>
            <person name="Ivanova N."/>
            <person name="Richardson P."/>
        </authorList>
    </citation>
    <scope>NUCLEOTIDE SEQUENCE [LARGE SCALE GENOMIC DNA]</scope>
    <source>
        <strain>DSM 273 / BCRC 81028 / 2530</strain>
    </source>
</reference>
<sequence>MAQFKRTLVTTALPYANGPVHLGHLAGVYLPADIYVRHKRLKGEEVLHIGGSDEHGVPITITAEKEGISPRDVVDRYHRMNLEAFLKCGISFDCYGRTSSELHHETAQEFFLELERKGIFNRRTEKLFYDAEGGRFLSDRYVSGTCPICGSTEASGDQCEQCGTHLSPMELINPKSKISNATPELRDTLHWYFPLGRYQAELERFVNSHEDDWRSNVLNYTRTWLKGGLNDRAITRDLNWGIKVPLGEAEAVGKVLYVWFDAVLGYISFTRQWAEEQGDRDLWRHWWQNPETRLVQFIGKDNVVFHTLMLPAILMAWNEGREDGIYNLADNVPASEFMNFEGRKFSKSRNYAVYLGEFLQKFPADTLRYSIAMNYPENKDTDFSWTDFQNRTNGELADTLGNFIKRSIDFTNSRFGGEVPHSCTVQEWEGLGIDWYATQSQLDQAYEGFHFREAATIAMDIARAANRFLTSAEPWKAIKTDPEAAGRTMALSLNLCHALSIALYPVIPETCDRIHRMLGFKGGVDGLVRKCEPILKTLLEPALPMGHKLSPESEILFRKIEDQEIQPELQKIEQLVREAEAREAGAIEVKIEFKPAIGFDDFQKVDLRVATVRAAEKVKKASKLLKLQVQVGSTQRQVLAGVAEHYSPEEMVGKNVLLVANLAPRTIRGEISEGMLLAVEGEGGRLFMVEPQGEKINGQSVQ</sequence>
<dbReference type="EC" id="6.1.1.10" evidence="1"/>
<dbReference type="EMBL" id="CP000096">
    <property type="protein sequence ID" value="ABB24048.1"/>
    <property type="molecule type" value="Genomic_DNA"/>
</dbReference>
<dbReference type="RefSeq" id="WP_011357920.1">
    <property type="nucleotide sequence ID" value="NC_007512.1"/>
</dbReference>
<dbReference type="SMR" id="Q3B3N3"/>
<dbReference type="STRING" id="319225.Plut_1186"/>
<dbReference type="KEGG" id="plt:Plut_1186"/>
<dbReference type="eggNOG" id="COG0073">
    <property type="taxonomic scope" value="Bacteria"/>
</dbReference>
<dbReference type="eggNOG" id="COG0143">
    <property type="taxonomic scope" value="Bacteria"/>
</dbReference>
<dbReference type="HOGENOM" id="CLU_009710_1_2_10"/>
<dbReference type="OrthoDB" id="9810191at2"/>
<dbReference type="Proteomes" id="UP000002709">
    <property type="component" value="Chromosome"/>
</dbReference>
<dbReference type="GO" id="GO:0005829">
    <property type="term" value="C:cytosol"/>
    <property type="evidence" value="ECO:0007669"/>
    <property type="project" value="TreeGrafter"/>
</dbReference>
<dbReference type="GO" id="GO:0005524">
    <property type="term" value="F:ATP binding"/>
    <property type="evidence" value="ECO:0007669"/>
    <property type="project" value="UniProtKB-UniRule"/>
</dbReference>
<dbReference type="GO" id="GO:0046872">
    <property type="term" value="F:metal ion binding"/>
    <property type="evidence" value="ECO:0007669"/>
    <property type="project" value="UniProtKB-KW"/>
</dbReference>
<dbReference type="GO" id="GO:0004825">
    <property type="term" value="F:methionine-tRNA ligase activity"/>
    <property type="evidence" value="ECO:0007669"/>
    <property type="project" value="UniProtKB-UniRule"/>
</dbReference>
<dbReference type="GO" id="GO:0000049">
    <property type="term" value="F:tRNA binding"/>
    <property type="evidence" value="ECO:0007669"/>
    <property type="project" value="UniProtKB-KW"/>
</dbReference>
<dbReference type="GO" id="GO:0006431">
    <property type="term" value="P:methionyl-tRNA aminoacylation"/>
    <property type="evidence" value="ECO:0007669"/>
    <property type="project" value="UniProtKB-UniRule"/>
</dbReference>
<dbReference type="CDD" id="cd07957">
    <property type="entry name" value="Anticodon_Ia_Met"/>
    <property type="match status" value="1"/>
</dbReference>
<dbReference type="CDD" id="cd00814">
    <property type="entry name" value="MetRS_core"/>
    <property type="match status" value="1"/>
</dbReference>
<dbReference type="CDD" id="cd02800">
    <property type="entry name" value="tRNA_bind_EcMetRS_like"/>
    <property type="match status" value="1"/>
</dbReference>
<dbReference type="FunFam" id="2.20.28.20:FF:000001">
    <property type="entry name" value="Methionine--tRNA ligase"/>
    <property type="match status" value="1"/>
</dbReference>
<dbReference type="FunFam" id="2.40.50.140:FF:000042">
    <property type="entry name" value="Methionine--tRNA ligase"/>
    <property type="match status" value="1"/>
</dbReference>
<dbReference type="Gene3D" id="3.40.50.620">
    <property type="entry name" value="HUPs"/>
    <property type="match status" value="1"/>
</dbReference>
<dbReference type="Gene3D" id="1.10.730.10">
    <property type="entry name" value="Isoleucyl-tRNA Synthetase, Domain 1"/>
    <property type="match status" value="1"/>
</dbReference>
<dbReference type="Gene3D" id="2.20.28.20">
    <property type="entry name" value="Methionyl-tRNA synthetase, Zn-domain"/>
    <property type="match status" value="1"/>
</dbReference>
<dbReference type="Gene3D" id="2.40.50.140">
    <property type="entry name" value="Nucleic acid-binding proteins"/>
    <property type="match status" value="1"/>
</dbReference>
<dbReference type="HAMAP" id="MF_00098">
    <property type="entry name" value="Met_tRNA_synth_type1"/>
    <property type="match status" value="1"/>
</dbReference>
<dbReference type="InterPro" id="IPR001412">
    <property type="entry name" value="aa-tRNA-synth_I_CS"/>
</dbReference>
<dbReference type="InterPro" id="IPR041872">
    <property type="entry name" value="Anticodon_Met"/>
</dbReference>
<dbReference type="InterPro" id="IPR004495">
    <property type="entry name" value="Met-tRNA-synth_bsu_C"/>
</dbReference>
<dbReference type="InterPro" id="IPR023458">
    <property type="entry name" value="Met-tRNA_ligase_1"/>
</dbReference>
<dbReference type="InterPro" id="IPR014758">
    <property type="entry name" value="Met-tRNA_synth"/>
</dbReference>
<dbReference type="InterPro" id="IPR015413">
    <property type="entry name" value="Methionyl/Leucyl_tRNA_Synth"/>
</dbReference>
<dbReference type="InterPro" id="IPR033911">
    <property type="entry name" value="MetRS_core"/>
</dbReference>
<dbReference type="InterPro" id="IPR029038">
    <property type="entry name" value="MetRS_Zn"/>
</dbReference>
<dbReference type="InterPro" id="IPR012340">
    <property type="entry name" value="NA-bd_OB-fold"/>
</dbReference>
<dbReference type="InterPro" id="IPR014729">
    <property type="entry name" value="Rossmann-like_a/b/a_fold"/>
</dbReference>
<dbReference type="InterPro" id="IPR002547">
    <property type="entry name" value="tRNA-bd_dom"/>
</dbReference>
<dbReference type="InterPro" id="IPR009080">
    <property type="entry name" value="tRNAsynth_Ia_anticodon-bd"/>
</dbReference>
<dbReference type="NCBIfam" id="TIGR00398">
    <property type="entry name" value="metG"/>
    <property type="match status" value="1"/>
</dbReference>
<dbReference type="NCBIfam" id="TIGR00399">
    <property type="entry name" value="metG_C_term"/>
    <property type="match status" value="1"/>
</dbReference>
<dbReference type="NCBIfam" id="NF001100">
    <property type="entry name" value="PRK00133.1"/>
    <property type="match status" value="1"/>
</dbReference>
<dbReference type="PANTHER" id="PTHR45765">
    <property type="entry name" value="METHIONINE--TRNA LIGASE"/>
    <property type="match status" value="1"/>
</dbReference>
<dbReference type="PANTHER" id="PTHR45765:SF1">
    <property type="entry name" value="METHIONINE--TRNA LIGASE, CYTOPLASMIC"/>
    <property type="match status" value="1"/>
</dbReference>
<dbReference type="Pfam" id="PF19303">
    <property type="entry name" value="Anticodon_3"/>
    <property type="match status" value="1"/>
</dbReference>
<dbReference type="Pfam" id="PF09334">
    <property type="entry name" value="tRNA-synt_1g"/>
    <property type="match status" value="1"/>
</dbReference>
<dbReference type="Pfam" id="PF01588">
    <property type="entry name" value="tRNA_bind"/>
    <property type="match status" value="1"/>
</dbReference>
<dbReference type="PRINTS" id="PR01041">
    <property type="entry name" value="TRNASYNTHMET"/>
</dbReference>
<dbReference type="SUPFAM" id="SSF47323">
    <property type="entry name" value="Anticodon-binding domain of a subclass of class I aminoacyl-tRNA synthetases"/>
    <property type="match status" value="1"/>
</dbReference>
<dbReference type="SUPFAM" id="SSF57770">
    <property type="entry name" value="Methionyl-tRNA synthetase (MetRS), Zn-domain"/>
    <property type="match status" value="1"/>
</dbReference>
<dbReference type="SUPFAM" id="SSF50249">
    <property type="entry name" value="Nucleic acid-binding proteins"/>
    <property type="match status" value="1"/>
</dbReference>
<dbReference type="SUPFAM" id="SSF52374">
    <property type="entry name" value="Nucleotidylyl transferase"/>
    <property type="match status" value="1"/>
</dbReference>
<dbReference type="PROSITE" id="PS00178">
    <property type="entry name" value="AA_TRNA_LIGASE_I"/>
    <property type="match status" value="1"/>
</dbReference>
<dbReference type="PROSITE" id="PS50886">
    <property type="entry name" value="TRBD"/>
    <property type="match status" value="1"/>
</dbReference>
<organism>
    <name type="scientific">Chlorobium luteolum (strain DSM 273 / BCRC 81028 / 2530)</name>
    <name type="common">Pelodictyon luteolum</name>
    <dbReference type="NCBI Taxonomy" id="319225"/>
    <lineage>
        <taxon>Bacteria</taxon>
        <taxon>Pseudomonadati</taxon>
        <taxon>Chlorobiota</taxon>
        <taxon>Chlorobiia</taxon>
        <taxon>Chlorobiales</taxon>
        <taxon>Chlorobiaceae</taxon>
        <taxon>Chlorobium/Pelodictyon group</taxon>
        <taxon>Pelodictyon</taxon>
    </lineage>
</organism>
<comment type="function">
    <text evidence="1">Is required not only for elongation of protein synthesis but also for the initiation of all mRNA translation through initiator tRNA(fMet) aminoacylation.</text>
</comment>
<comment type="catalytic activity">
    <reaction evidence="1">
        <text>tRNA(Met) + L-methionine + ATP = L-methionyl-tRNA(Met) + AMP + diphosphate</text>
        <dbReference type="Rhea" id="RHEA:13481"/>
        <dbReference type="Rhea" id="RHEA-COMP:9667"/>
        <dbReference type="Rhea" id="RHEA-COMP:9698"/>
        <dbReference type="ChEBI" id="CHEBI:30616"/>
        <dbReference type="ChEBI" id="CHEBI:33019"/>
        <dbReference type="ChEBI" id="CHEBI:57844"/>
        <dbReference type="ChEBI" id="CHEBI:78442"/>
        <dbReference type="ChEBI" id="CHEBI:78530"/>
        <dbReference type="ChEBI" id="CHEBI:456215"/>
        <dbReference type="EC" id="6.1.1.10"/>
    </reaction>
</comment>
<comment type="cofactor">
    <cofactor evidence="1">
        <name>Zn(2+)</name>
        <dbReference type="ChEBI" id="CHEBI:29105"/>
    </cofactor>
    <text evidence="1">Binds 1 zinc ion per subunit.</text>
</comment>
<comment type="subunit">
    <text evidence="1">Homodimer.</text>
</comment>
<comment type="subcellular location">
    <subcellularLocation>
        <location evidence="1">Cytoplasm</location>
    </subcellularLocation>
</comment>
<comment type="similarity">
    <text evidence="1">Belongs to the class-I aminoacyl-tRNA synthetase family. MetG type 1 subfamily.</text>
</comment>
<accession>Q3B3N3</accession>
<protein>
    <recommendedName>
        <fullName evidence="1">Methionine--tRNA ligase</fullName>
        <ecNumber evidence="1">6.1.1.10</ecNumber>
    </recommendedName>
    <alternativeName>
        <fullName evidence="1">Methionyl-tRNA synthetase</fullName>
        <shortName evidence="1">MetRS</shortName>
    </alternativeName>
</protein>
<evidence type="ECO:0000255" key="1">
    <source>
        <dbReference type="HAMAP-Rule" id="MF_00098"/>
    </source>
</evidence>
<name>SYM_CHLL3</name>
<keyword id="KW-0030">Aminoacyl-tRNA synthetase</keyword>
<keyword id="KW-0067">ATP-binding</keyword>
<keyword id="KW-0963">Cytoplasm</keyword>
<keyword id="KW-0436">Ligase</keyword>
<keyword id="KW-0479">Metal-binding</keyword>
<keyword id="KW-0547">Nucleotide-binding</keyword>
<keyword id="KW-0648">Protein biosynthesis</keyword>
<keyword id="KW-1185">Reference proteome</keyword>
<keyword id="KW-0694">RNA-binding</keyword>
<keyword id="KW-0820">tRNA-binding</keyword>
<keyword id="KW-0862">Zinc</keyword>
<gene>
    <name evidence="1" type="primary">metG</name>
    <name type="ordered locus">Plut_1186</name>
</gene>
<feature type="chain" id="PRO_0000331861" description="Methionine--tRNA ligase">
    <location>
        <begin position="1"/>
        <end position="702"/>
    </location>
</feature>
<feature type="domain" description="tRNA-binding" evidence="1">
    <location>
        <begin position="601"/>
        <end position="702"/>
    </location>
</feature>
<feature type="short sequence motif" description="'HIGH' region">
    <location>
        <begin position="14"/>
        <end position="24"/>
    </location>
</feature>
<feature type="short sequence motif" description="'KMSKS' region">
    <location>
        <begin position="344"/>
        <end position="348"/>
    </location>
</feature>
<feature type="binding site" evidence="1">
    <location>
        <position position="146"/>
    </location>
    <ligand>
        <name>Zn(2+)</name>
        <dbReference type="ChEBI" id="CHEBI:29105"/>
    </ligand>
</feature>
<feature type="binding site" evidence="1">
    <location>
        <position position="149"/>
    </location>
    <ligand>
        <name>Zn(2+)</name>
        <dbReference type="ChEBI" id="CHEBI:29105"/>
    </ligand>
</feature>
<feature type="binding site" evidence="1">
    <location>
        <position position="159"/>
    </location>
    <ligand>
        <name>Zn(2+)</name>
        <dbReference type="ChEBI" id="CHEBI:29105"/>
    </ligand>
</feature>
<feature type="binding site" evidence="1">
    <location>
        <position position="162"/>
    </location>
    <ligand>
        <name>Zn(2+)</name>
        <dbReference type="ChEBI" id="CHEBI:29105"/>
    </ligand>
</feature>
<feature type="binding site" evidence="1">
    <location>
        <position position="347"/>
    </location>
    <ligand>
        <name>ATP</name>
        <dbReference type="ChEBI" id="CHEBI:30616"/>
    </ligand>
</feature>